<proteinExistence type="evidence at protein level"/>
<gene>
    <name evidence="8" type="primary">COBL10</name>
    <name evidence="10" type="ordered locus">At3g20580</name>
    <name evidence="11" type="ORF">K10D20.11</name>
</gene>
<evidence type="ECO:0000255" key="1"/>
<evidence type="ECO:0000255" key="2">
    <source>
        <dbReference type="PROSITE-ProRule" id="PRU00498"/>
    </source>
</evidence>
<evidence type="ECO:0000255" key="3">
    <source>
        <dbReference type="PROSITE-ProRule" id="PRU01135"/>
    </source>
</evidence>
<evidence type="ECO:0000269" key="4">
    <source>
    </source>
</evidence>
<evidence type="ECO:0000269" key="5">
    <source>
    </source>
</evidence>
<evidence type="ECO:0000269" key="6">
    <source>
    </source>
</evidence>
<evidence type="ECO:0000269" key="7">
    <source>
    </source>
</evidence>
<evidence type="ECO:0000303" key="8">
    <source>
    </source>
</evidence>
<evidence type="ECO:0000305" key="9"/>
<evidence type="ECO:0000312" key="10">
    <source>
        <dbReference type="Araport" id="AT3G20580"/>
    </source>
</evidence>
<evidence type="ECO:0000312" key="11">
    <source>
        <dbReference type="EMBL" id="BAB01166.1"/>
    </source>
</evidence>
<sequence length="672" mass="74670">MRAIDVKTGMKIPWDVRYSLSLFIFLSSILFLSNGQDYGMPGEDGGGGAEPPPEMAHCNGIFMSYNFGSREREYPHVKNVTAQSWAFKSTAMIVNAGREELKGWQMFIGFRHKELIVSATGATPMDGDYPLDASNGTTFVGSPNMDLKTSIETAGDFTQISANIEITGTLFGVSKAVTPMPRTIKLTNDGWECPAAKRKGGSMHVCCKRNPKIKNKIGLKTKFAPRRYGDLNIVYDVLQSFDSNYLAQVTIDNDNPLGRLDRWNLTFEWMRGEFINTMRGAYTHKKDPSECLYSKAGQYYKDLDFSQVMNCQRKPAISDLPPEKKEDNMTGKLPFCCKNGTLLPPIMDPSKSRSMFQLQVFKLPPDLNRTALYPPQHWKIDGVLNPQYKCGPPVRVDPSQFPDPSGLLAVTYAISSWQVVCNITKPKAQASRCCVSFSAFYNNSAVPCNTCACGCNDIDTDTCNANSNPLLLPPDALLVPFDNRTLKAKAWAKQNHMPVPKKLPCPDNCGVSINWHVSTDYKNGWTARLTVFNWRDFAFEDWFVAIDMGKAGPGYENVYSFNGTRVPPSNRTVIFQGLPGMNYLVGQVNGTNPLRDPPVPGKQQSVISFTKKNIKGLNIPEGDGFPTKLFFNGEECALPKHFPKKSSGHRRGISVSMSFVFATIAAFALMMD</sequence>
<protein>
    <recommendedName>
        <fullName evidence="8">COBRA-like protein 10</fullName>
    </recommendedName>
</protein>
<reference key="1">
    <citation type="journal article" date="2000" name="DNA Res.">
        <title>Structural analysis of Arabidopsis thaliana chromosome 3. II. Sequence features of the 4,251,695 bp regions covered by 90 P1, TAC and BAC clones.</title>
        <authorList>
            <person name="Kaneko T."/>
            <person name="Katoh T."/>
            <person name="Sato S."/>
            <person name="Nakamura Y."/>
            <person name="Asamizu E."/>
            <person name="Tabata S."/>
        </authorList>
    </citation>
    <scope>NUCLEOTIDE SEQUENCE [LARGE SCALE GENOMIC DNA]</scope>
    <source>
        <strain>cv. Columbia</strain>
    </source>
</reference>
<reference key="2">
    <citation type="journal article" date="2017" name="Plant J.">
        <title>Araport11: a complete reannotation of the Arabidopsis thaliana reference genome.</title>
        <authorList>
            <person name="Cheng C.Y."/>
            <person name="Krishnakumar V."/>
            <person name="Chan A.P."/>
            <person name="Thibaud-Nissen F."/>
            <person name="Schobel S."/>
            <person name="Town C.D."/>
        </authorList>
    </citation>
    <scope>GENOME REANNOTATION</scope>
    <source>
        <strain>cv. Columbia</strain>
    </source>
</reference>
<reference key="3">
    <citation type="journal article" date="2002" name="Science">
        <title>Functional annotation of a full-length Arabidopsis cDNA collection.</title>
        <authorList>
            <person name="Seki M."/>
            <person name="Narusaka M."/>
            <person name="Kamiya A."/>
            <person name="Ishida J."/>
            <person name="Satou M."/>
            <person name="Sakurai T."/>
            <person name="Nakajima M."/>
            <person name="Enju A."/>
            <person name="Akiyama K."/>
            <person name="Oono Y."/>
            <person name="Muramatsu M."/>
            <person name="Hayashizaki Y."/>
            <person name="Kawai J."/>
            <person name="Carninci P."/>
            <person name="Itoh M."/>
            <person name="Ishii Y."/>
            <person name="Arakawa T."/>
            <person name="Shibata K."/>
            <person name="Shinagawa A."/>
            <person name="Shinozaki K."/>
        </authorList>
    </citation>
    <scope>NUCLEOTIDE SEQUENCE [LARGE SCALE MRNA]</scope>
    <source>
        <strain>cv. Columbia</strain>
    </source>
</reference>
<reference key="4">
    <citation type="journal article" date="2003" name="Science">
        <title>Empirical analysis of transcriptional activity in the Arabidopsis genome.</title>
        <authorList>
            <person name="Yamada K."/>
            <person name="Lim J."/>
            <person name="Dale J.M."/>
            <person name="Chen H."/>
            <person name="Shinn P."/>
            <person name="Palm C.J."/>
            <person name="Southwick A.M."/>
            <person name="Wu H.C."/>
            <person name="Kim C.J."/>
            <person name="Nguyen M."/>
            <person name="Pham P.K."/>
            <person name="Cheuk R.F."/>
            <person name="Karlin-Newmann G."/>
            <person name="Liu S.X."/>
            <person name="Lam B."/>
            <person name="Sakano H."/>
            <person name="Wu T."/>
            <person name="Yu G."/>
            <person name="Miranda M."/>
            <person name="Quach H.L."/>
            <person name="Tripp M."/>
            <person name="Chang C.H."/>
            <person name="Lee J.M."/>
            <person name="Toriumi M.J."/>
            <person name="Chan M.M."/>
            <person name="Tang C.C."/>
            <person name="Onodera C.S."/>
            <person name="Deng J.M."/>
            <person name="Akiyama K."/>
            <person name="Ansari Y."/>
            <person name="Arakawa T."/>
            <person name="Banh J."/>
            <person name="Banno F."/>
            <person name="Bowser L."/>
            <person name="Brooks S.Y."/>
            <person name="Carninci P."/>
            <person name="Chao Q."/>
            <person name="Choy N."/>
            <person name="Enju A."/>
            <person name="Goldsmith A.D."/>
            <person name="Gurjal M."/>
            <person name="Hansen N.F."/>
            <person name="Hayashizaki Y."/>
            <person name="Johnson-Hopson C."/>
            <person name="Hsuan V.W."/>
            <person name="Iida K."/>
            <person name="Karnes M."/>
            <person name="Khan S."/>
            <person name="Koesema E."/>
            <person name="Ishida J."/>
            <person name="Jiang P.X."/>
            <person name="Jones T."/>
            <person name="Kawai J."/>
            <person name="Kamiya A."/>
            <person name="Meyers C."/>
            <person name="Nakajima M."/>
            <person name="Narusaka M."/>
            <person name="Seki M."/>
            <person name="Sakurai T."/>
            <person name="Satou M."/>
            <person name="Tamse R."/>
            <person name="Vaysberg M."/>
            <person name="Wallender E.K."/>
            <person name="Wong C."/>
            <person name="Yamamura Y."/>
            <person name="Yuan S."/>
            <person name="Shinozaki K."/>
            <person name="Davis R.W."/>
            <person name="Theologis A."/>
            <person name="Ecker J.R."/>
        </authorList>
    </citation>
    <scope>NUCLEOTIDE SEQUENCE [LARGE SCALE MRNA]</scope>
    <source>
        <strain>cv. Columbia</strain>
    </source>
</reference>
<reference key="5">
    <citation type="journal article" date="2002" name="Plant Physiol.">
        <title>The COBRA family of putative GPI-anchored proteins in Arabidopsis. A new fellowship in expansion.</title>
        <authorList>
            <person name="Roudier F."/>
            <person name="Schindelman G."/>
            <person name="DeSalle R."/>
            <person name="Benfey P.N."/>
        </authorList>
    </citation>
    <scope>TISSUE SPECIFICITY</scope>
</reference>
<reference key="6">
    <citation type="journal article" date="2013" name="Plant J.">
        <title>Arabidopsis COBRA-LIKE 10, a GPI-anchored protein, mediates directional growth of pollen tubes.</title>
        <authorList>
            <person name="Li S."/>
            <person name="Ge F.-R."/>
            <person name="Xu M."/>
            <person name="Zhao X.-Y."/>
            <person name="Huang G.-Q."/>
            <person name="Zhou L.-Z."/>
            <person name="Wang J.-G."/>
            <person name="Kombrink A."/>
            <person name="McCormick S."/>
            <person name="Zhang X.S."/>
            <person name="Zhang Y."/>
        </authorList>
    </citation>
    <scope>FUNCTION</scope>
    <scope>MUTAGENESIS OF 664-ILE--ASP-672</scope>
    <scope>DISRUPTION PHENOTYPE</scope>
    <scope>SUBCELLULAR LOCATION</scope>
    <scope>TISSUE SPECIFICITY</scope>
    <source>
        <strain>cv. Columbia</strain>
    </source>
</reference>
<reference key="7">
    <citation type="journal article" date="2014" name="Plant Physiol.">
        <title>ABNORMAL POLLEN TUBE GUIDANCE1, an endoplasmic reticulum-localized mannosyltransferase homolog of GLYCOSYLPHOSPHATIDYLINOSITOL10 in yeast and PHOSPHATIDYLINOSITOL GLYCAN ANCHOR BIOSYNTHESIS B in human, is required for Arabidopsis pollen tube micropylar guidance and embryo development.</title>
        <authorList>
            <person name="Dai X.R."/>
            <person name="Gao X.-Q."/>
            <person name="Chen G.H."/>
            <person name="Tang L.L."/>
            <person name="Wang H."/>
            <person name="Zhang X.S."/>
        </authorList>
    </citation>
    <scope>FUNCTION</scope>
    <scope>DISRUPTION PHENOTYPE</scope>
    <scope>GPI-ANCHOR</scope>
    <scope>SUBCELLULAR LOCATION</scope>
    <source>
        <strain>cv. Columbia</strain>
    </source>
</reference>
<reference key="8">
    <citation type="journal article" date="2017" name="Plant Physiol.">
        <title>Two membrane-anchored aspartic proteases contribute to pollen and ovule development.</title>
        <authorList>
            <person name="Gao H."/>
            <person name="Zhang Y."/>
            <person name="Wang W."/>
            <person name="Zhao K."/>
            <person name="Liu C."/>
            <person name="Bai L."/>
            <person name="Li R."/>
            <person name="Guo Y."/>
        </authorList>
    </citation>
    <scope>FUNCTION</scope>
    <scope>DISRUPTION PHENOTYPE</scope>
    <scope>SUBCELLULAR LOCATION</scope>
</reference>
<dbReference type="EMBL" id="AP000410">
    <property type="protein sequence ID" value="BAB01166.1"/>
    <property type="molecule type" value="Genomic_DNA"/>
</dbReference>
<dbReference type="EMBL" id="CP002686">
    <property type="protein sequence ID" value="AEE76400.1"/>
    <property type="molecule type" value="Genomic_DNA"/>
</dbReference>
<dbReference type="EMBL" id="AK118605">
    <property type="protein sequence ID" value="BAC43204.1"/>
    <property type="molecule type" value="mRNA"/>
</dbReference>
<dbReference type="EMBL" id="BT005952">
    <property type="protein sequence ID" value="AAO64887.1"/>
    <property type="molecule type" value="mRNA"/>
</dbReference>
<dbReference type="RefSeq" id="NP_188694.2">
    <property type="nucleotide sequence ID" value="NM_112950.3"/>
</dbReference>
<dbReference type="FunCoup" id="Q9LJU0">
    <property type="interactions" value="13"/>
</dbReference>
<dbReference type="STRING" id="3702.Q9LJU0"/>
<dbReference type="GlyCosmos" id="Q9LJU0">
    <property type="glycosylation" value="12 sites, No reported glycans"/>
</dbReference>
<dbReference type="GlyGen" id="Q9LJU0">
    <property type="glycosylation" value="12 sites"/>
</dbReference>
<dbReference type="PaxDb" id="3702-AT3G20580.1"/>
<dbReference type="ProteomicsDB" id="223954"/>
<dbReference type="EnsemblPlants" id="AT3G20580.1">
    <property type="protein sequence ID" value="AT3G20580.1"/>
    <property type="gene ID" value="AT3G20580"/>
</dbReference>
<dbReference type="GeneID" id="821605"/>
<dbReference type="Gramene" id="AT3G20580.1">
    <property type="protein sequence ID" value="AT3G20580.1"/>
    <property type="gene ID" value="AT3G20580"/>
</dbReference>
<dbReference type="KEGG" id="ath:AT3G20580"/>
<dbReference type="Araport" id="AT3G20580"/>
<dbReference type="TAIR" id="AT3G20580">
    <property type="gene designation" value="COBL10"/>
</dbReference>
<dbReference type="eggNOG" id="ENOG502QUPM">
    <property type="taxonomic scope" value="Eukaryota"/>
</dbReference>
<dbReference type="HOGENOM" id="CLU_420019_0_0_1"/>
<dbReference type="InParanoid" id="Q9LJU0"/>
<dbReference type="OMA" id="HVCCKRD"/>
<dbReference type="PhylomeDB" id="Q9LJU0"/>
<dbReference type="PRO" id="PR:Q9LJU0"/>
<dbReference type="Proteomes" id="UP000006548">
    <property type="component" value="Chromosome 3"/>
</dbReference>
<dbReference type="ExpressionAtlas" id="Q9LJU0">
    <property type="expression patterns" value="baseline and differential"/>
</dbReference>
<dbReference type="GO" id="GO:0016324">
    <property type="term" value="C:apical plasma membrane"/>
    <property type="evidence" value="ECO:0000314"/>
    <property type="project" value="UniProtKB"/>
</dbReference>
<dbReference type="GO" id="GO:0005737">
    <property type="term" value="C:cytoplasm"/>
    <property type="evidence" value="ECO:0000314"/>
    <property type="project" value="UniProtKB"/>
</dbReference>
<dbReference type="GO" id="GO:0005886">
    <property type="term" value="C:plasma membrane"/>
    <property type="evidence" value="ECO:0000314"/>
    <property type="project" value="UniProtKB"/>
</dbReference>
<dbReference type="GO" id="GO:0090406">
    <property type="term" value="C:pollen tube"/>
    <property type="evidence" value="ECO:0000314"/>
    <property type="project" value="UniProtKB"/>
</dbReference>
<dbReference type="GO" id="GO:0098552">
    <property type="term" value="C:side of membrane"/>
    <property type="evidence" value="ECO:0007669"/>
    <property type="project" value="UniProtKB-KW"/>
</dbReference>
<dbReference type="GO" id="GO:0031982">
    <property type="term" value="C:vesicle"/>
    <property type="evidence" value="ECO:0000314"/>
    <property type="project" value="UniProtKB"/>
</dbReference>
<dbReference type="GO" id="GO:0071555">
    <property type="term" value="P:cell wall organization"/>
    <property type="evidence" value="ECO:0000315"/>
    <property type="project" value="UniProtKB"/>
</dbReference>
<dbReference type="GO" id="GO:0010215">
    <property type="term" value="P:cellulose microfibril organization"/>
    <property type="evidence" value="ECO:0007669"/>
    <property type="project" value="InterPro"/>
</dbReference>
<dbReference type="GO" id="GO:0009860">
    <property type="term" value="P:pollen tube growth"/>
    <property type="evidence" value="ECO:0000315"/>
    <property type="project" value="UniProtKB"/>
</dbReference>
<dbReference type="GO" id="GO:0010183">
    <property type="term" value="P:pollen tube guidance"/>
    <property type="evidence" value="ECO:0000315"/>
    <property type="project" value="UniProtKB"/>
</dbReference>
<dbReference type="InterPro" id="IPR056900">
    <property type="entry name" value="COB_C"/>
</dbReference>
<dbReference type="InterPro" id="IPR006918">
    <property type="entry name" value="COBRA_pln"/>
</dbReference>
<dbReference type="PANTHER" id="PTHR31052:SF2">
    <property type="entry name" value="COBRA-LIKE PROTEIN 10"/>
    <property type="match status" value="1"/>
</dbReference>
<dbReference type="PANTHER" id="PTHR31052">
    <property type="entry name" value="COBRA-LIKE PROTEIN 7"/>
    <property type="match status" value="1"/>
</dbReference>
<dbReference type="Pfam" id="PF25079">
    <property type="entry name" value="COB_C"/>
    <property type="match status" value="1"/>
</dbReference>
<dbReference type="Pfam" id="PF04833">
    <property type="entry name" value="COBRA"/>
    <property type="match status" value="1"/>
</dbReference>
<feature type="signal peptide" evidence="1">
    <location>
        <begin position="1"/>
        <end position="35"/>
    </location>
</feature>
<feature type="chain" id="PRO_0000005587" description="COBRA-like protein 10">
    <location>
        <begin position="36"/>
        <end position="646"/>
    </location>
</feature>
<feature type="propeptide" id="PRO_0000005588" description="Removed in mature form" evidence="1">
    <location>
        <begin position="647"/>
        <end position="672"/>
    </location>
</feature>
<feature type="domain" description="CBM2" evidence="3">
    <location>
        <begin position="502"/>
        <end position="607"/>
    </location>
</feature>
<feature type="short sequence motif" description="Required for processing by the PIG complex, a critical step for apical plasma membrane localization in pollen tubes" evidence="5">
    <location>
        <begin position="664"/>
        <end position="672"/>
    </location>
</feature>
<feature type="lipid moiety-binding region" description="GPI-anchor amidated serine" evidence="1">
    <location>
        <position position="646"/>
    </location>
</feature>
<feature type="glycosylation site" description="N-linked (GlcNAc...) asparagine" evidence="2">
    <location>
        <position position="79"/>
    </location>
</feature>
<feature type="glycosylation site" description="N-linked (GlcNAc...) asparagine" evidence="2">
    <location>
        <position position="135"/>
    </location>
</feature>
<feature type="glycosylation site" description="N-linked (GlcNAc...) asparagine" evidence="2">
    <location>
        <position position="264"/>
    </location>
</feature>
<feature type="glycosylation site" description="N-linked (GlcNAc...) asparagine" evidence="2">
    <location>
        <position position="328"/>
    </location>
</feature>
<feature type="glycosylation site" description="N-linked (GlcNAc...) asparagine" evidence="2">
    <location>
        <position position="339"/>
    </location>
</feature>
<feature type="glycosylation site" description="N-linked (GlcNAc...) asparagine" evidence="2">
    <location>
        <position position="368"/>
    </location>
</feature>
<feature type="glycosylation site" description="N-linked (GlcNAc...) asparagine" evidence="2">
    <location>
        <position position="422"/>
    </location>
</feature>
<feature type="glycosylation site" description="N-linked (GlcNAc...) asparagine" evidence="2">
    <location>
        <position position="442"/>
    </location>
</feature>
<feature type="glycosylation site" description="N-linked (GlcNAc...) asparagine" evidence="2">
    <location>
        <position position="483"/>
    </location>
</feature>
<feature type="glycosylation site" description="N-linked (GlcNAc...) asparagine" evidence="2">
    <location>
        <position position="562"/>
    </location>
</feature>
<feature type="glycosylation site" description="N-linked (GlcNAc...) asparagine" evidence="2">
    <location>
        <position position="570"/>
    </location>
</feature>
<feature type="glycosylation site" description="N-linked (GlcNAc...) asparagine" evidence="2">
    <location>
        <position position="589"/>
    </location>
</feature>
<feature type="mutagenesis site" description="Lost apical plasma membrane localization in pollen tubes." evidence="5">
    <original>IAAFALMMD</original>
    <variation>NNNNNNNNN</variation>
    <location>
        <begin position="664"/>
        <end position="672"/>
    </location>
</feature>
<keyword id="KW-1003">Cell membrane</keyword>
<keyword id="KW-0963">Cytoplasm</keyword>
<keyword id="KW-0325">Glycoprotein</keyword>
<keyword id="KW-0336">GPI-anchor</keyword>
<keyword id="KW-0449">Lipoprotein</keyword>
<keyword id="KW-0472">Membrane</keyword>
<keyword id="KW-1185">Reference proteome</keyword>
<keyword id="KW-0732">Signal</keyword>
<organism>
    <name type="scientific">Arabidopsis thaliana</name>
    <name type="common">Mouse-ear cress</name>
    <dbReference type="NCBI Taxonomy" id="3702"/>
    <lineage>
        <taxon>Eukaryota</taxon>
        <taxon>Viridiplantae</taxon>
        <taxon>Streptophyta</taxon>
        <taxon>Embryophyta</taxon>
        <taxon>Tracheophyta</taxon>
        <taxon>Spermatophyta</taxon>
        <taxon>Magnoliopsida</taxon>
        <taxon>eudicotyledons</taxon>
        <taxon>Gunneridae</taxon>
        <taxon>Pentapetalae</taxon>
        <taxon>rosids</taxon>
        <taxon>malvids</taxon>
        <taxon>Brassicales</taxon>
        <taxon>Brassicaceae</taxon>
        <taxon>Camelineae</taxon>
        <taxon>Arabidopsis</taxon>
    </lineage>
</organism>
<accession>Q9LJU0</accession>
<comment type="function">
    <text evidence="5 6 7">Involved in the deposition of apical pectin cap and cellulose microfibrils in pollen tubes (PubMed:23384085). Not essential for pollen development, hydration or germination, but required for pollen tubes growth in the female transmitting tract of pistil and toward micropyles, via the perception of ovule guidance cues (PubMed:23384085, PubMed:24963069, PubMed:27872247).</text>
</comment>
<comment type="subcellular location">
    <subcellularLocation>
        <location evidence="5 6 7">Cell membrane</location>
        <topology evidence="5 6">Lipid-anchor</topology>
        <topology evidence="5 6">GPI-anchor</topology>
    </subcellularLocation>
    <subcellularLocation>
        <location evidence="6 7">Cytoplasm</location>
    </subcellularLocation>
    <subcellularLocation>
        <location evidence="5">Vesicle</location>
    </subcellularLocation>
    <text evidence="5 6 7">Localization to the plasma membrane is dependent of the GPI-anchor at Ser-646 (PubMed:23384085, PubMed:24963069). Localized at the apical plasma membrane of pollen tubes (PubMed:23384085, PubMed:24963069). Colocalizes with A36 and A39 at the plasma membrane and in the cytoplasm in the growing pollen tubes (PubMed:27872247). In the cytoplasm, observed in motile punctate vesicles (PubMed:23384085).</text>
</comment>
<comment type="tissue specificity">
    <text evidence="4 5">Expressed in roots, stems, leaves, flowers and siliques (PubMed:12376623). Specific expression in the pollen tube (PubMed:23384085).</text>
</comment>
<comment type="PTM">
    <text evidence="6">The GPI-anchor attachment at Ser-646 requires APTG1.</text>
</comment>
<comment type="disruption phenotype">
    <text evidence="5 6 7">Gametophytic male sterility due to reduced pollen tube growth and compromised directional ovular guidance cues sensing in the female transmitting tract, thus leading to an abnormal pollen tubes guidance growth toward micropyles (PubMed:23384085, PubMed:24963069, PubMed:27872247). Normal pollen development, hydration and germination (PubMed:23384085). Disrupted apical pectin cap and cellulose microfibrils deposition in pollen tubes resulting in an abnormal cell wall organization (PubMed:23384085).</text>
</comment>
<comment type="similarity">
    <text evidence="9">Belongs to the COBRA family.</text>
</comment>
<name>CBL10_ARATH</name>